<organism>
    <name type="scientific">Homo sapiens</name>
    <name type="common">Human</name>
    <dbReference type="NCBI Taxonomy" id="9606"/>
    <lineage>
        <taxon>Eukaryota</taxon>
        <taxon>Metazoa</taxon>
        <taxon>Chordata</taxon>
        <taxon>Craniata</taxon>
        <taxon>Vertebrata</taxon>
        <taxon>Euteleostomi</taxon>
        <taxon>Mammalia</taxon>
        <taxon>Eutheria</taxon>
        <taxon>Euarchontoglires</taxon>
        <taxon>Primates</taxon>
        <taxon>Haplorrhini</taxon>
        <taxon>Catarrhini</taxon>
        <taxon>Hominidae</taxon>
        <taxon>Homo</taxon>
    </lineage>
</organism>
<sequence>MQNSEGGADSPASVALRPSAAAPPVPASPQRVLVQAASSNPKGAQMQPISLPRVQQVPQQVQPVQHVYPAQVQYVEGGDAVYTNGAIRTAYTYNPEPQMYAPSSTASYFEAPGGAQVTVAASSPPAVPSHSMVGITMDVGGSPIVSSAGAYLIHGGMDSTRHSLAHTSRSSPATLEMAIENLQKSEGITSHKSGLLNSHLQWLLDNYETAEGVSLPRSSLYNHYLRHCQEHKLDPVNAASFGKLIRSVFMGLRTRRLGTRGNSKYHYYGIRLKPDSPLNRLQEDTQYMAMRQQPMHQKPRYRPAQKTDSLGDSGSHSGLHSTPEQTMAVQSQHHQQYIDVSHVFPEFPAPDLGSFLLQDGVTLHDVKALQLVYRRHCEATVDVVMNLQFHYIEKLWLSFWNSKASSSDGPTSLPASDEDPEGAVLPKDKLISLCQCDPILRWMRSCDHILYQALVEILIPDVLRPVPSTLTQAIRNFAKSLEGWLTNAMSDFPQQVIQTKVGVVSAFAQTLRRYTSLNHLAQAARAVLQNTSQINQMLSDLNRVDFANVQEQASWVCQCEESVVQRLEQDFKLTLQQQSSLDQWASWLDSVVTQVLKQHAGSPSFPKAARQFLLKWSFYSSMVIRDLTLRSAASFGSFHLIRLLYDEYMFYLVEHRVAEATGETPIAVMGEFNDLASLSLTLLDKDDMGDEQRGSEAGPDARSLGEPLVKRERSDPNHSLQGI</sequence>
<gene>
    <name type="primary">RFX2</name>
</gene>
<dbReference type="EMBL" id="X76091">
    <property type="protein sequence ID" value="CAA53705.1"/>
    <property type="molecule type" value="mRNA"/>
</dbReference>
<dbReference type="EMBL" id="AK024288">
    <property type="protein sequence ID" value="BAG51286.1"/>
    <property type="status" value="ALT_INIT"/>
    <property type="molecule type" value="mRNA"/>
</dbReference>
<dbReference type="EMBL" id="AK291196">
    <property type="protein sequence ID" value="BAF83885.1"/>
    <property type="molecule type" value="mRNA"/>
</dbReference>
<dbReference type="EMBL" id="AC011444">
    <property type="status" value="NOT_ANNOTATED_CDS"/>
    <property type="molecule type" value="Genomic_DNA"/>
</dbReference>
<dbReference type="EMBL" id="BC028579">
    <property type="protein sequence ID" value="AAH28579.1"/>
    <property type="molecule type" value="mRNA"/>
</dbReference>
<dbReference type="EMBL" id="BC071571">
    <property type="protein sequence ID" value="AAH71571.1"/>
    <property type="molecule type" value="mRNA"/>
</dbReference>
<dbReference type="CCDS" id="CCDS12157.1">
    <molecule id="P48378-1"/>
</dbReference>
<dbReference type="CCDS" id="CCDS12158.1">
    <molecule id="P48378-2"/>
</dbReference>
<dbReference type="PIR" id="B55926">
    <property type="entry name" value="B55926"/>
</dbReference>
<dbReference type="RefSeq" id="NP_000626.2">
    <molecule id="P48378-1"/>
    <property type="nucleotide sequence ID" value="NM_000635.3"/>
</dbReference>
<dbReference type="RefSeq" id="NP_602309.1">
    <molecule id="P48378-2"/>
    <property type="nucleotide sequence ID" value="NM_134433.3"/>
</dbReference>
<dbReference type="RefSeq" id="XP_011526473.1">
    <property type="nucleotide sequence ID" value="XM_011528171.2"/>
</dbReference>
<dbReference type="RefSeq" id="XP_047295152.1">
    <molecule id="P48378-1"/>
    <property type="nucleotide sequence ID" value="XM_047439196.1"/>
</dbReference>
<dbReference type="RefSeq" id="XP_047295153.1">
    <molecule id="P48378-2"/>
    <property type="nucleotide sequence ID" value="XM_047439197.1"/>
</dbReference>
<dbReference type="RefSeq" id="XP_054177656.1">
    <molecule id="P48378-1"/>
    <property type="nucleotide sequence ID" value="XM_054321681.1"/>
</dbReference>
<dbReference type="RefSeq" id="XP_054177657.1">
    <molecule id="P48378-2"/>
    <property type="nucleotide sequence ID" value="XM_054321682.1"/>
</dbReference>
<dbReference type="SMR" id="P48378"/>
<dbReference type="BioGRID" id="111922">
    <property type="interactions" value="23"/>
</dbReference>
<dbReference type="FunCoup" id="P48378">
    <property type="interactions" value="1388"/>
</dbReference>
<dbReference type="IntAct" id="P48378">
    <property type="interactions" value="20"/>
</dbReference>
<dbReference type="MINT" id="P48378"/>
<dbReference type="STRING" id="9606.ENSP00000306335"/>
<dbReference type="GlyGen" id="P48378">
    <property type="glycosylation" value="1 site, 1 O-linked glycan (1 site)"/>
</dbReference>
<dbReference type="iPTMnet" id="P48378"/>
<dbReference type="PhosphoSitePlus" id="P48378"/>
<dbReference type="BioMuta" id="RFX2"/>
<dbReference type="DMDM" id="254763325"/>
<dbReference type="jPOST" id="P48378"/>
<dbReference type="MassIVE" id="P48378"/>
<dbReference type="PaxDb" id="9606-ENSP00000306335"/>
<dbReference type="PeptideAtlas" id="P48378"/>
<dbReference type="ProteomicsDB" id="55881">
    <molecule id="P48378-1"/>
</dbReference>
<dbReference type="ProteomicsDB" id="55882">
    <molecule id="P48378-2"/>
</dbReference>
<dbReference type="Antibodypedia" id="24073">
    <property type="antibodies" value="152 antibodies from 25 providers"/>
</dbReference>
<dbReference type="DNASU" id="5990"/>
<dbReference type="Ensembl" id="ENST00000303657.10">
    <molecule id="P48378-1"/>
    <property type="protein sequence ID" value="ENSP00000306335.4"/>
    <property type="gene ID" value="ENSG00000087903.13"/>
</dbReference>
<dbReference type="Ensembl" id="ENST00000359161.7">
    <molecule id="P48378-1"/>
    <property type="protein sequence ID" value="ENSP00000352076.3"/>
    <property type="gene ID" value="ENSG00000087903.13"/>
</dbReference>
<dbReference type="Ensembl" id="ENST00000592546.5">
    <molecule id="P48378-2"/>
    <property type="protein sequence ID" value="ENSP00000467166.1"/>
    <property type="gene ID" value="ENSG00000087903.13"/>
</dbReference>
<dbReference type="GeneID" id="5990"/>
<dbReference type="KEGG" id="hsa:5990"/>
<dbReference type="MANE-Select" id="ENST00000303657.10">
    <property type="protein sequence ID" value="ENSP00000306335.4"/>
    <property type="RefSeq nucleotide sequence ID" value="NM_000635.4"/>
    <property type="RefSeq protein sequence ID" value="NP_000626.2"/>
</dbReference>
<dbReference type="UCSC" id="uc002meb.4">
    <molecule id="P48378-1"/>
    <property type="organism name" value="human"/>
</dbReference>
<dbReference type="AGR" id="HGNC:9983"/>
<dbReference type="CTD" id="5990"/>
<dbReference type="DisGeNET" id="5990"/>
<dbReference type="GeneCards" id="RFX2"/>
<dbReference type="HGNC" id="HGNC:9983">
    <property type="gene designation" value="RFX2"/>
</dbReference>
<dbReference type="HPA" id="ENSG00000087903">
    <property type="expression patterns" value="Tissue enhanced (testis)"/>
</dbReference>
<dbReference type="MIM" id="142765">
    <property type="type" value="gene"/>
</dbReference>
<dbReference type="neXtProt" id="NX_P48378"/>
<dbReference type="OpenTargets" id="ENSG00000087903"/>
<dbReference type="PharmGKB" id="PA34353"/>
<dbReference type="VEuPathDB" id="HostDB:ENSG00000087903"/>
<dbReference type="eggNOG" id="KOG3712">
    <property type="taxonomic scope" value="Eukaryota"/>
</dbReference>
<dbReference type="GeneTree" id="ENSGT01050000244879"/>
<dbReference type="HOGENOM" id="CLU_010393_1_1_1"/>
<dbReference type="InParanoid" id="P48378"/>
<dbReference type="OMA" id="QFIDMSH"/>
<dbReference type="OrthoDB" id="10056949at2759"/>
<dbReference type="PAN-GO" id="P48378">
    <property type="GO annotations" value="3 GO annotations based on evolutionary models"/>
</dbReference>
<dbReference type="PhylomeDB" id="P48378"/>
<dbReference type="TreeFam" id="TF321340"/>
<dbReference type="PathwayCommons" id="P48378"/>
<dbReference type="SignaLink" id="P48378"/>
<dbReference type="SIGNOR" id="P48378"/>
<dbReference type="BioGRID-ORCS" id="5990">
    <property type="hits" value="10 hits in 1177 CRISPR screens"/>
</dbReference>
<dbReference type="ChiTaRS" id="RFX2">
    <property type="organism name" value="human"/>
</dbReference>
<dbReference type="GeneWiki" id="RFX2"/>
<dbReference type="GenomeRNAi" id="5990"/>
<dbReference type="Pharos" id="P48378">
    <property type="development level" value="Tbio"/>
</dbReference>
<dbReference type="PRO" id="PR:P48378"/>
<dbReference type="Proteomes" id="UP000005640">
    <property type="component" value="Chromosome 19"/>
</dbReference>
<dbReference type="RNAct" id="P48378">
    <property type="molecule type" value="protein"/>
</dbReference>
<dbReference type="Bgee" id="ENSG00000087903">
    <property type="expression patterns" value="Expressed in right uterine tube and 176 other cell types or tissues"/>
</dbReference>
<dbReference type="ExpressionAtlas" id="P48378">
    <property type="expression patterns" value="baseline and differential"/>
</dbReference>
<dbReference type="GO" id="GO:0000785">
    <property type="term" value="C:chromatin"/>
    <property type="evidence" value="ECO:0000247"/>
    <property type="project" value="NTNU_SB"/>
</dbReference>
<dbReference type="GO" id="GO:0005737">
    <property type="term" value="C:cytoplasm"/>
    <property type="evidence" value="ECO:0000250"/>
    <property type="project" value="UniProtKB"/>
</dbReference>
<dbReference type="GO" id="GO:0005634">
    <property type="term" value="C:nucleus"/>
    <property type="evidence" value="ECO:0000250"/>
    <property type="project" value="UniProtKB"/>
</dbReference>
<dbReference type="GO" id="GO:0003677">
    <property type="term" value="F:DNA binding"/>
    <property type="evidence" value="ECO:0000304"/>
    <property type="project" value="ProtInc"/>
</dbReference>
<dbReference type="GO" id="GO:0001228">
    <property type="term" value="F:DNA-binding transcription activator activity, RNA polymerase II-specific"/>
    <property type="evidence" value="ECO:0007669"/>
    <property type="project" value="Ensembl"/>
</dbReference>
<dbReference type="GO" id="GO:0003700">
    <property type="term" value="F:DNA-binding transcription factor activity"/>
    <property type="evidence" value="ECO:0000250"/>
    <property type="project" value="UniProtKB"/>
</dbReference>
<dbReference type="GO" id="GO:0000981">
    <property type="term" value="F:DNA-binding transcription factor activity, RNA polymerase II-specific"/>
    <property type="evidence" value="ECO:0000247"/>
    <property type="project" value="NTNU_SB"/>
</dbReference>
<dbReference type="GO" id="GO:0000978">
    <property type="term" value="F:RNA polymerase II cis-regulatory region sequence-specific DNA binding"/>
    <property type="evidence" value="ECO:0000250"/>
    <property type="project" value="UniProtKB"/>
</dbReference>
<dbReference type="GO" id="GO:1990837">
    <property type="term" value="F:sequence-specific double-stranded DNA binding"/>
    <property type="evidence" value="ECO:0000314"/>
    <property type="project" value="ARUK-UCL"/>
</dbReference>
<dbReference type="GO" id="GO:0001675">
    <property type="term" value="P:acrosome assembly"/>
    <property type="evidence" value="ECO:0000250"/>
    <property type="project" value="UniProtKB"/>
</dbReference>
<dbReference type="GO" id="GO:1990830">
    <property type="term" value="P:cellular response to leukemia inhibitory factor"/>
    <property type="evidence" value="ECO:0007669"/>
    <property type="project" value="Ensembl"/>
</dbReference>
<dbReference type="GO" id="GO:0060271">
    <property type="term" value="P:cilium assembly"/>
    <property type="evidence" value="ECO:0000250"/>
    <property type="project" value="UniProtKB"/>
</dbReference>
<dbReference type="GO" id="GO:0006357">
    <property type="term" value="P:regulation of transcription by RNA polymerase II"/>
    <property type="evidence" value="ECO:0000250"/>
    <property type="project" value="UniProtKB"/>
</dbReference>
<dbReference type="GO" id="GO:0007286">
    <property type="term" value="P:spermatid development"/>
    <property type="evidence" value="ECO:0000250"/>
    <property type="project" value="UniProtKB"/>
</dbReference>
<dbReference type="FunFam" id="1.10.10.10:FF:000017">
    <property type="entry name" value="transcription factor RFX3 isoform X1"/>
    <property type="match status" value="1"/>
</dbReference>
<dbReference type="Gene3D" id="1.10.10.10">
    <property type="entry name" value="Winged helix-like DNA-binding domain superfamily/Winged helix DNA-binding domain"/>
    <property type="match status" value="1"/>
</dbReference>
<dbReference type="InterPro" id="IPR003150">
    <property type="entry name" value="DNA-bd_RFX"/>
</dbReference>
<dbReference type="InterPro" id="IPR039779">
    <property type="entry name" value="RFX-like"/>
</dbReference>
<dbReference type="InterPro" id="IPR007668">
    <property type="entry name" value="RFX1_trans_act"/>
</dbReference>
<dbReference type="InterPro" id="IPR036388">
    <property type="entry name" value="WH-like_DNA-bd_sf"/>
</dbReference>
<dbReference type="InterPro" id="IPR036390">
    <property type="entry name" value="WH_DNA-bd_sf"/>
</dbReference>
<dbReference type="PANTHER" id="PTHR12619:SF17">
    <property type="entry name" value="DNA-BINDING PROTEIN RFX2"/>
    <property type="match status" value="1"/>
</dbReference>
<dbReference type="PANTHER" id="PTHR12619">
    <property type="entry name" value="RFX TRANSCRIPTION FACTOR FAMILY"/>
    <property type="match status" value="1"/>
</dbReference>
<dbReference type="Pfam" id="PF25340">
    <property type="entry name" value="BCD_RFX"/>
    <property type="match status" value="1"/>
</dbReference>
<dbReference type="Pfam" id="PF04589">
    <property type="entry name" value="RFX1_trans_act"/>
    <property type="match status" value="1"/>
</dbReference>
<dbReference type="Pfam" id="PF02257">
    <property type="entry name" value="RFX_DNA_binding"/>
    <property type="match status" value="1"/>
</dbReference>
<dbReference type="SUPFAM" id="SSF46785">
    <property type="entry name" value="Winged helix' DNA-binding domain"/>
    <property type="match status" value="1"/>
</dbReference>
<dbReference type="PROSITE" id="PS51526">
    <property type="entry name" value="RFX_DBD"/>
    <property type="match status" value="1"/>
</dbReference>
<protein>
    <recommendedName>
        <fullName>DNA-binding protein RFX2</fullName>
    </recommendedName>
    <alternativeName>
        <fullName>Regulatory factor X 2</fullName>
    </alternativeName>
</protein>
<reference key="1">
    <citation type="journal article" date="1994" name="Mol. Cell. Biol.">
        <title>RFX1, a transactivator of hepatitis B virus enhancer I, belongs to a novel family of homodimeric and heterodimeric DNA-binding proteins.</title>
        <authorList>
            <person name="Reith W."/>
            <person name="Ucla C."/>
            <person name="Barras E."/>
            <person name="Gaud A."/>
            <person name="Durand B."/>
            <person name="Herrero-Sanchez C."/>
            <person name="Kobr M."/>
            <person name="Mach B."/>
        </authorList>
    </citation>
    <scope>NUCLEOTIDE SEQUENCE [MRNA] (ISOFORM 1)</scope>
    <scope>VARIANT THR-86</scope>
</reference>
<reference key="2">
    <citation type="journal article" date="2004" name="Nat. Genet.">
        <title>Complete sequencing and characterization of 21,243 full-length human cDNAs.</title>
        <authorList>
            <person name="Ota T."/>
            <person name="Suzuki Y."/>
            <person name="Nishikawa T."/>
            <person name="Otsuki T."/>
            <person name="Sugiyama T."/>
            <person name="Irie R."/>
            <person name="Wakamatsu A."/>
            <person name="Hayashi K."/>
            <person name="Sato H."/>
            <person name="Nagai K."/>
            <person name="Kimura K."/>
            <person name="Makita H."/>
            <person name="Sekine M."/>
            <person name="Obayashi M."/>
            <person name="Nishi T."/>
            <person name="Shibahara T."/>
            <person name="Tanaka T."/>
            <person name="Ishii S."/>
            <person name="Yamamoto J."/>
            <person name="Saito K."/>
            <person name="Kawai Y."/>
            <person name="Isono Y."/>
            <person name="Nakamura Y."/>
            <person name="Nagahari K."/>
            <person name="Murakami K."/>
            <person name="Yasuda T."/>
            <person name="Iwayanagi T."/>
            <person name="Wagatsuma M."/>
            <person name="Shiratori A."/>
            <person name="Sudo H."/>
            <person name="Hosoiri T."/>
            <person name="Kaku Y."/>
            <person name="Kodaira H."/>
            <person name="Kondo H."/>
            <person name="Sugawara M."/>
            <person name="Takahashi M."/>
            <person name="Kanda K."/>
            <person name="Yokoi T."/>
            <person name="Furuya T."/>
            <person name="Kikkawa E."/>
            <person name="Omura Y."/>
            <person name="Abe K."/>
            <person name="Kamihara K."/>
            <person name="Katsuta N."/>
            <person name="Sato K."/>
            <person name="Tanikawa M."/>
            <person name="Yamazaki M."/>
            <person name="Ninomiya K."/>
            <person name="Ishibashi T."/>
            <person name="Yamashita H."/>
            <person name="Murakawa K."/>
            <person name="Fujimori K."/>
            <person name="Tanai H."/>
            <person name="Kimata M."/>
            <person name="Watanabe M."/>
            <person name="Hiraoka S."/>
            <person name="Chiba Y."/>
            <person name="Ishida S."/>
            <person name="Ono Y."/>
            <person name="Takiguchi S."/>
            <person name="Watanabe S."/>
            <person name="Yosida M."/>
            <person name="Hotuta T."/>
            <person name="Kusano J."/>
            <person name="Kanehori K."/>
            <person name="Takahashi-Fujii A."/>
            <person name="Hara H."/>
            <person name="Tanase T.-O."/>
            <person name="Nomura Y."/>
            <person name="Togiya S."/>
            <person name="Komai F."/>
            <person name="Hara R."/>
            <person name="Takeuchi K."/>
            <person name="Arita M."/>
            <person name="Imose N."/>
            <person name="Musashino K."/>
            <person name="Yuuki H."/>
            <person name="Oshima A."/>
            <person name="Sasaki N."/>
            <person name="Aotsuka S."/>
            <person name="Yoshikawa Y."/>
            <person name="Matsunawa H."/>
            <person name="Ichihara T."/>
            <person name="Shiohata N."/>
            <person name="Sano S."/>
            <person name="Moriya S."/>
            <person name="Momiyama H."/>
            <person name="Satoh N."/>
            <person name="Takami S."/>
            <person name="Terashima Y."/>
            <person name="Suzuki O."/>
            <person name="Nakagawa S."/>
            <person name="Senoh A."/>
            <person name="Mizoguchi H."/>
            <person name="Goto Y."/>
            <person name="Shimizu F."/>
            <person name="Wakebe H."/>
            <person name="Hishigaki H."/>
            <person name="Watanabe T."/>
            <person name="Sugiyama A."/>
            <person name="Takemoto M."/>
            <person name="Kawakami B."/>
            <person name="Yamazaki M."/>
            <person name="Watanabe K."/>
            <person name="Kumagai A."/>
            <person name="Itakura S."/>
            <person name="Fukuzumi Y."/>
            <person name="Fujimori Y."/>
            <person name="Komiyama M."/>
            <person name="Tashiro H."/>
            <person name="Tanigami A."/>
            <person name="Fujiwara T."/>
            <person name="Ono T."/>
            <person name="Yamada K."/>
            <person name="Fujii Y."/>
            <person name="Ozaki K."/>
            <person name="Hirao M."/>
            <person name="Ohmori Y."/>
            <person name="Kawabata A."/>
            <person name="Hikiji T."/>
            <person name="Kobatake N."/>
            <person name="Inagaki H."/>
            <person name="Ikema Y."/>
            <person name="Okamoto S."/>
            <person name="Okitani R."/>
            <person name="Kawakami T."/>
            <person name="Noguchi S."/>
            <person name="Itoh T."/>
            <person name="Shigeta K."/>
            <person name="Senba T."/>
            <person name="Matsumura K."/>
            <person name="Nakajima Y."/>
            <person name="Mizuno T."/>
            <person name="Morinaga M."/>
            <person name="Sasaki M."/>
            <person name="Togashi T."/>
            <person name="Oyama M."/>
            <person name="Hata H."/>
            <person name="Watanabe M."/>
            <person name="Komatsu T."/>
            <person name="Mizushima-Sugano J."/>
            <person name="Satoh T."/>
            <person name="Shirai Y."/>
            <person name="Takahashi Y."/>
            <person name="Nakagawa K."/>
            <person name="Okumura K."/>
            <person name="Nagase T."/>
            <person name="Nomura N."/>
            <person name="Kikuchi H."/>
            <person name="Masuho Y."/>
            <person name="Yamashita R."/>
            <person name="Nakai K."/>
            <person name="Yada T."/>
            <person name="Nakamura Y."/>
            <person name="Ohara O."/>
            <person name="Isogai T."/>
            <person name="Sugano S."/>
        </authorList>
    </citation>
    <scope>NUCLEOTIDE SEQUENCE [LARGE SCALE MRNA] (ISOFORM 2)</scope>
    <scope>VARIANT THR-86</scope>
</reference>
<reference key="3">
    <citation type="journal article" date="2004" name="Nature">
        <title>The DNA sequence and biology of human chromosome 19.</title>
        <authorList>
            <person name="Grimwood J."/>
            <person name="Gordon L.A."/>
            <person name="Olsen A.S."/>
            <person name="Terry A."/>
            <person name="Schmutz J."/>
            <person name="Lamerdin J.E."/>
            <person name="Hellsten U."/>
            <person name="Goodstein D."/>
            <person name="Couronne O."/>
            <person name="Tran-Gyamfi M."/>
            <person name="Aerts A."/>
            <person name="Altherr M."/>
            <person name="Ashworth L."/>
            <person name="Bajorek E."/>
            <person name="Black S."/>
            <person name="Branscomb E."/>
            <person name="Caenepeel S."/>
            <person name="Carrano A.V."/>
            <person name="Caoile C."/>
            <person name="Chan Y.M."/>
            <person name="Christensen M."/>
            <person name="Cleland C.A."/>
            <person name="Copeland A."/>
            <person name="Dalin E."/>
            <person name="Dehal P."/>
            <person name="Denys M."/>
            <person name="Detter J.C."/>
            <person name="Escobar J."/>
            <person name="Flowers D."/>
            <person name="Fotopulos D."/>
            <person name="Garcia C."/>
            <person name="Georgescu A.M."/>
            <person name="Glavina T."/>
            <person name="Gomez M."/>
            <person name="Gonzales E."/>
            <person name="Groza M."/>
            <person name="Hammon N."/>
            <person name="Hawkins T."/>
            <person name="Haydu L."/>
            <person name="Ho I."/>
            <person name="Huang W."/>
            <person name="Israni S."/>
            <person name="Jett J."/>
            <person name="Kadner K."/>
            <person name="Kimball H."/>
            <person name="Kobayashi A."/>
            <person name="Larionov V."/>
            <person name="Leem S.-H."/>
            <person name="Lopez F."/>
            <person name="Lou Y."/>
            <person name="Lowry S."/>
            <person name="Malfatti S."/>
            <person name="Martinez D."/>
            <person name="McCready P.M."/>
            <person name="Medina C."/>
            <person name="Morgan J."/>
            <person name="Nelson K."/>
            <person name="Nolan M."/>
            <person name="Ovcharenko I."/>
            <person name="Pitluck S."/>
            <person name="Pollard M."/>
            <person name="Popkie A.P."/>
            <person name="Predki P."/>
            <person name="Quan G."/>
            <person name="Ramirez L."/>
            <person name="Rash S."/>
            <person name="Retterer J."/>
            <person name="Rodriguez A."/>
            <person name="Rogers S."/>
            <person name="Salamov A."/>
            <person name="Salazar A."/>
            <person name="She X."/>
            <person name="Smith D."/>
            <person name="Slezak T."/>
            <person name="Solovyev V."/>
            <person name="Thayer N."/>
            <person name="Tice H."/>
            <person name="Tsai M."/>
            <person name="Ustaszewska A."/>
            <person name="Vo N."/>
            <person name="Wagner M."/>
            <person name="Wheeler J."/>
            <person name="Wu K."/>
            <person name="Xie G."/>
            <person name="Yang J."/>
            <person name="Dubchak I."/>
            <person name="Furey T.S."/>
            <person name="DeJong P."/>
            <person name="Dickson M."/>
            <person name="Gordon D."/>
            <person name="Eichler E.E."/>
            <person name="Pennacchio L.A."/>
            <person name="Richardson P."/>
            <person name="Stubbs L."/>
            <person name="Rokhsar D.S."/>
            <person name="Myers R.M."/>
            <person name="Rubin E.M."/>
            <person name="Lucas S.M."/>
        </authorList>
    </citation>
    <scope>NUCLEOTIDE SEQUENCE [LARGE SCALE GENOMIC DNA]</scope>
    <source>
        <tissue>Brain</tissue>
    </source>
</reference>
<reference key="4">
    <citation type="journal article" date="2004" name="Genome Res.">
        <title>The status, quality, and expansion of the NIH full-length cDNA project: the Mammalian Gene Collection (MGC).</title>
        <authorList>
            <consortium name="The MGC Project Team"/>
        </authorList>
    </citation>
    <scope>NUCLEOTIDE SEQUENCE [LARGE SCALE MRNA] (ISOFORM 1)</scope>
    <scope>VARIANT GLN-610</scope>
    <source>
        <tissue>Testis</tissue>
    </source>
</reference>
<reference key="5">
    <citation type="journal article" date="2013" name="J. Proteome Res.">
        <title>Toward a comprehensive characterization of a human cancer cell phosphoproteome.</title>
        <authorList>
            <person name="Zhou H."/>
            <person name="Di Palma S."/>
            <person name="Preisinger C."/>
            <person name="Peng M."/>
            <person name="Polat A.N."/>
            <person name="Heck A.J."/>
            <person name="Mohammed S."/>
        </authorList>
    </citation>
    <scope>PHOSPHORYLATION [LARGE SCALE ANALYSIS] AT SER-28</scope>
    <scope>IDENTIFICATION BY MASS SPECTROMETRY [LARGE SCALE ANALYSIS]</scope>
    <source>
        <tissue>Erythroleukemia</tissue>
    </source>
</reference>
<reference key="6">
    <citation type="journal article" date="2006" name="Science">
        <title>The consensus coding sequences of human breast and colorectal cancers.</title>
        <authorList>
            <person name="Sjoeblom T."/>
            <person name="Jones S."/>
            <person name="Wood L.D."/>
            <person name="Parsons D.W."/>
            <person name="Lin J."/>
            <person name="Barber T.D."/>
            <person name="Mandelker D."/>
            <person name="Leary R.J."/>
            <person name="Ptak J."/>
            <person name="Silliman N."/>
            <person name="Szabo S."/>
            <person name="Buckhaults P."/>
            <person name="Farrell C."/>
            <person name="Meeh P."/>
            <person name="Markowitz S.D."/>
            <person name="Willis J."/>
            <person name="Dawson D."/>
            <person name="Willson J.K.V."/>
            <person name="Gazdar A.F."/>
            <person name="Hartigan J."/>
            <person name="Wu L."/>
            <person name="Liu C."/>
            <person name="Parmigiani G."/>
            <person name="Park B.H."/>
            <person name="Bachman K.E."/>
            <person name="Papadopoulos N."/>
            <person name="Vogelstein B."/>
            <person name="Kinzler K.W."/>
            <person name="Velculescu V.E."/>
        </authorList>
    </citation>
    <scope>VARIANTS [LARGE SCALE ANALYSIS] GLY-37 AND LYS-110</scope>
</reference>
<reference key="7">
    <citation type="journal article" date="1999" name="Mol. Cell. Biol.">
        <title>Dimeric RFX proteins contribute to the activity and lineage specificity of the interleukin-5 receptor alpha promoter through activation and repression domains.</title>
        <authorList>
            <person name="Iwama A."/>
            <person name="Pan J."/>
            <person name="Zhang P."/>
            <person name="Reith W."/>
            <person name="Mach B."/>
            <person name="Tenen D.G."/>
            <person name="Sun Z."/>
        </authorList>
    </citation>
    <scope>SUBUNIT</scope>
    <scope>DNA-BINDING</scope>
</reference>
<proteinExistence type="evidence at protein level"/>
<name>RFX2_HUMAN</name>
<evidence type="ECO:0000250" key="1">
    <source>
        <dbReference type="UniProtKB" id="B2GV50"/>
    </source>
</evidence>
<evidence type="ECO:0000250" key="2">
    <source>
        <dbReference type="UniProtKB" id="P48379"/>
    </source>
</evidence>
<evidence type="ECO:0000255" key="3">
    <source>
        <dbReference type="PROSITE-ProRule" id="PRU00858"/>
    </source>
</evidence>
<evidence type="ECO:0000256" key="4">
    <source>
        <dbReference type="SAM" id="MobiDB-lite"/>
    </source>
</evidence>
<evidence type="ECO:0000269" key="5">
    <source>
    </source>
</evidence>
<evidence type="ECO:0000269" key="6">
    <source>
    </source>
</evidence>
<evidence type="ECO:0000269" key="7">
    <source>
    </source>
</evidence>
<evidence type="ECO:0000269" key="8">
    <source>
    </source>
</evidence>
<evidence type="ECO:0000269" key="9">
    <source>
    </source>
</evidence>
<evidence type="ECO:0000303" key="10">
    <source>
    </source>
</evidence>
<evidence type="ECO:0000305" key="11"/>
<evidence type="ECO:0007744" key="12">
    <source>
    </source>
</evidence>
<accession>P48378</accession>
<accession>A8K581</accession>
<accession>B3KNC4</accession>
<accession>Q6IQ44</accession>
<accession>Q8SNA2</accession>
<feature type="chain" id="PRO_0000215288" description="DNA-binding protein RFX2">
    <location>
        <begin position="1"/>
        <end position="723"/>
    </location>
</feature>
<feature type="DNA-binding region" description="RFX-type winged-helix" evidence="3">
    <location>
        <begin position="199"/>
        <end position="274"/>
    </location>
</feature>
<feature type="region of interest" description="Disordered" evidence="4">
    <location>
        <begin position="1"/>
        <end position="46"/>
    </location>
</feature>
<feature type="region of interest" description="Disordered" evidence="4">
    <location>
        <begin position="292"/>
        <end position="332"/>
    </location>
</feature>
<feature type="region of interest" description="Disordered" evidence="4">
    <location>
        <begin position="688"/>
        <end position="723"/>
    </location>
</feature>
<feature type="compositionally biased region" description="Low complexity" evidence="4">
    <location>
        <begin position="10"/>
        <end position="20"/>
    </location>
</feature>
<feature type="compositionally biased region" description="Low complexity" evidence="4">
    <location>
        <begin position="308"/>
        <end position="321"/>
    </location>
</feature>
<feature type="compositionally biased region" description="Polar residues" evidence="4">
    <location>
        <begin position="322"/>
        <end position="332"/>
    </location>
</feature>
<feature type="modified residue" description="Phosphoserine" evidence="12">
    <location>
        <position position="28"/>
    </location>
</feature>
<feature type="modified residue" description="Phosphoserine" evidence="1">
    <location>
        <position position="416"/>
    </location>
</feature>
<feature type="splice variant" id="VSP_037811" description="In isoform 2." evidence="10">
    <location>
        <begin position="175"/>
        <end position="199"/>
    </location>
</feature>
<feature type="sequence variant" id="VAR_036530" description="In a breast cancer sample; somatic mutation." evidence="8">
    <original>A</original>
    <variation>G</variation>
    <location>
        <position position="37"/>
    </location>
</feature>
<feature type="sequence variant" id="VAR_057151" description="In dbSNP:rs2288846." evidence="6 9">
    <original>A</original>
    <variation>T</variation>
    <location>
        <position position="86"/>
    </location>
</feature>
<feature type="sequence variant" id="VAR_036531" description="In a breast cancer sample; somatic mutation; dbSNP:rs748493309." evidence="8">
    <original>E</original>
    <variation>K</variation>
    <location>
        <position position="110"/>
    </location>
</feature>
<feature type="sequence variant" id="VAR_058416" description="In dbSNP:rs17852566." evidence="7">
    <original>R</original>
    <variation>Q</variation>
    <location>
        <position position="610"/>
    </location>
</feature>
<feature type="sequence conflict" description="In Ref. 1; CAA53705." evidence="11" ref="1">
    <original>A</original>
    <variation>S</variation>
    <location>
        <position position="44"/>
    </location>
</feature>
<feature type="sequence conflict" description="In Ref. 2; BAF83885." evidence="11" ref="2">
    <original>S</original>
    <variation>P</variation>
    <location>
        <position position="170"/>
    </location>
</feature>
<feature type="sequence conflict" description="In Ref. 4; AAH71571." evidence="11" ref="4">
    <original>P</original>
    <variation>H</variation>
    <location>
        <position position="216"/>
    </location>
</feature>
<comment type="function">
    <text evidence="2 5">Transcription factor that acts as a key regulator of spermatogenesis. Acts by regulating expression of genes required for the haploid phase during spermiogenesis, such as genes required for cilium assembly and function (By similarity). Recognizes and binds the X-box, a regulatory motif with DNA sequence 5'-GTNRCC(0-3N)RGYAAC-3' present on promoters (PubMed:10330134). Probably activates transcription of the testis-specific histone gene H1-6 (By similarity).</text>
</comment>
<comment type="subunit">
    <text evidence="2 5">Homodimer; probably only forms homodimers in testis (By similarity). Heterodimer; heterodimerizes with RFX1 and RFX3 (PubMed:10330134).</text>
</comment>
<comment type="interaction">
    <interactant intactId="EBI-746731">
        <id>P48378</id>
    </interactant>
    <interactant intactId="EBI-12807776">
        <id>O00167-2</id>
        <label>EYA2</label>
    </interactant>
    <organismsDiffer>false</organismsDiffer>
    <experiments>3</experiments>
</comment>
<comment type="interaction">
    <interactant intactId="EBI-746731">
        <id>P48378</id>
    </interactant>
    <interactant intactId="EBI-1760377">
        <id>Q92949</id>
        <label>FOXJ1</label>
    </interactant>
    <organismsDiffer>false</organismsDiffer>
    <experiments>7</experiments>
</comment>
<comment type="interaction">
    <interactant intactId="EBI-746731">
        <id>P48378</id>
    </interactant>
    <interactant intactId="EBI-11749712">
        <id>Q96NZ1</id>
        <label>FOXN4</label>
    </interactant>
    <organismsDiffer>false</organismsDiffer>
    <experiments>3</experiments>
</comment>
<comment type="interaction">
    <interactant intactId="EBI-746731">
        <id>P48378</id>
    </interactant>
    <interactant intactId="EBI-10271199">
        <id>Q8NI38</id>
        <label>NFKBID</label>
    </interactant>
    <organismsDiffer>false</organismsDiffer>
    <experiments>3</experiments>
</comment>
<comment type="interaction">
    <interactant intactId="EBI-746731">
        <id>P48378</id>
    </interactant>
    <interactant intactId="EBI-348567">
        <id>O75928-2</id>
        <label>PIAS2</label>
    </interactant>
    <organismsDiffer>false</organismsDiffer>
    <experiments>3</experiments>
</comment>
<comment type="interaction">
    <interactant intactId="EBI-746731">
        <id>P48378</id>
    </interactant>
    <interactant intactId="EBI-746118">
        <id>Q8HWS3</id>
        <label>RFX6</label>
    </interactant>
    <organismsDiffer>false</organismsDiffer>
    <experiments>4</experiments>
</comment>
<comment type="subcellular location">
    <subcellularLocation>
        <location evidence="1 3">Nucleus</location>
    </subcellularLocation>
    <subcellularLocation>
        <location evidence="1">Cytoplasm</location>
    </subcellularLocation>
    <text evidence="1">Mainly expressed in the nucleus and at lower level in cytoplasm.</text>
</comment>
<comment type="alternative products">
    <event type="alternative splicing"/>
    <isoform>
        <id>P48378-1</id>
        <name>1</name>
        <sequence type="displayed"/>
    </isoform>
    <isoform>
        <id>P48378-2</id>
        <name>2</name>
        <sequence type="described" ref="VSP_037811"/>
    </isoform>
</comment>
<comment type="similarity">
    <text evidence="3">Belongs to the RFX family.</text>
</comment>
<comment type="sequence caution" evidence="11">
    <conflict type="erroneous initiation">
        <sequence resource="EMBL-CDS" id="BAG51286"/>
    </conflict>
</comment>
<keyword id="KW-0025">Alternative splicing</keyword>
<keyword id="KW-0970">Cilium biogenesis/degradation</keyword>
<keyword id="KW-0963">Cytoplasm</keyword>
<keyword id="KW-0221">Differentiation</keyword>
<keyword id="KW-0238">DNA-binding</keyword>
<keyword id="KW-0539">Nucleus</keyword>
<keyword id="KW-0597">Phosphoprotein</keyword>
<keyword id="KW-1267">Proteomics identification</keyword>
<keyword id="KW-1185">Reference proteome</keyword>
<keyword id="KW-0744">Spermatogenesis</keyword>
<keyword id="KW-0804">Transcription</keyword>
<keyword id="KW-0805">Transcription regulation</keyword>